<evidence type="ECO:0000250" key="1"/>
<evidence type="ECO:0000255" key="2"/>
<evidence type="ECO:0000305" key="3"/>
<dbReference type="EMBL" id="DS499596">
    <property type="protein sequence ID" value="EDP52266.1"/>
    <property type="molecule type" value="Genomic_DNA"/>
</dbReference>
<dbReference type="SMR" id="B0XZT4"/>
<dbReference type="MEROPS" id="I78.001"/>
<dbReference type="EnsemblFungi" id="EDP52266">
    <property type="protein sequence ID" value="EDP52266"/>
    <property type="gene ID" value="AFUB_034300"/>
</dbReference>
<dbReference type="VEuPathDB" id="FungiDB:AFUB_034300"/>
<dbReference type="HOGENOM" id="CLU_2483894_0_0_1"/>
<dbReference type="OrthoDB" id="78050at5052"/>
<dbReference type="Proteomes" id="UP000001699">
    <property type="component" value="Unassembled WGS sequence"/>
</dbReference>
<dbReference type="GO" id="GO:0005576">
    <property type="term" value="C:extracellular region"/>
    <property type="evidence" value="ECO:0007669"/>
    <property type="project" value="UniProtKB-SubCell"/>
</dbReference>
<dbReference type="GO" id="GO:0004867">
    <property type="term" value="F:serine-type endopeptidase inhibitor activity"/>
    <property type="evidence" value="ECO:0007669"/>
    <property type="project" value="UniProtKB-KW"/>
</dbReference>
<dbReference type="Gene3D" id="3.30.10.10">
    <property type="entry name" value="Trypsin Inhibitor V, subunit A"/>
    <property type="match status" value="1"/>
</dbReference>
<dbReference type="InterPro" id="IPR021719">
    <property type="entry name" value="Prot_inh_I78"/>
</dbReference>
<dbReference type="Pfam" id="PF11720">
    <property type="entry name" value="Inhibitor_I78"/>
    <property type="match status" value="1"/>
</dbReference>
<reference key="1">
    <citation type="journal article" date="2008" name="PLoS Genet.">
        <title>Genomic islands in the pathogenic filamentous fungus Aspergillus fumigatus.</title>
        <authorList>
            <person name="Fedorova N.D."/>
            <person name="Khaldi N."/>
            <person name="Joardar V.S."/>
            <person name="Maiti R."/>
            <person name="Amedeo P."/>
            <person name="Anderson M.J."/>
            <person name="Crabtree J."/>
            <person name="Silva J.C."/>
            <person name="Badger J.H."/>
            <person name="Albarraq A."/>
            <person name="Angiuoli S."/>
            <person name="Bussey H."/>
            <person name="Bowyer P."/>
            <person name="Cotty P.J."/>
            <person name="Dyer P.S."/>
            <person name="Egan A."/>
            <person name="Galens K."/>
            <person name="Fraser-Liggett C.M."/>
            <person name="Haas B.J."/>
            <person name="Inman J.M."/>
            <person name="Kent R."/>
            <person name="Lemieux S."/>
            <person name="Malavazi I."/>
            <person name="Orvis J."/>
            <person name="Roemer T."/>
            <person name="Ronning C.M."/>
            <person name="Sundaram J.P."/>
            <person name="Sutton G."/>
            <person name="Turner G."/>
            <person name="Venter J.C."/>
            <person name="White O.R."/>
            <person name="Whitty B.R."/>
            <person name="Youngman P."/>
            <person name="Wolfe K.H."/>
            <person name="Goldman G.H."/>
            <person name="Wortman J.R."/>
            <person name="Jiang B."/>
            <person name="Denning D.W."/>
            <person name="Nierman W.C."/>
        </authorList>
    </citation>
    <scope>NUCLEOTIDE SEQUENCE [LARGE SCALE GENOMIC DNA]</scope>
    <source>
        <strain>CBS 144.89 / FGSC A1163 / CEA10</strain>
    </source>
</reference>
<feature type="signal peptide" evidence="2">
    <location>
        <begin position="1"/>
        <end position="19"/>
    </location>
</feature>
<feature type="chain" id="PRO_0000352769" description="Elastase inhibitor AFLEI">
    <location>
        <begin position="20"/>
        <end position="87"/>
    </location>
</feature>
<feature type="disulfide bond" evidence="1">
    <location>
        <begin position="24"/>
        <end position="86"/>
    </location>
</feature>
<proteinExistence type="inferred from homology"/>
<organism>
    <name type="scientific">Aspergillus fumigatus (strain CBS 144.89 / FGSC A1163 / CEA10)</name>
    <name type="common">Neosartorya fumigata</name>
    <dbReference type="NCBI Taxonomy" id="451804"/>
    <lineage>
        <taxon>Eukaryota</taxon>
        <taxon>Fungi</taxon>
        <taxon>Dikarya</taxon>
        <taxon>Ascomycota</taxon>
        <taxon>Pezizomycotina</taxon>
        <taxon>Eurotiomycetes</taxon>
        <taxon>Eurotiomycetidae</taxon>
        <taxon>Eurotiales</taxon>
        <taxon>Aspergillaceae</taxon>
        <taxon>Aspergillus</taxon>
        <taxon>Aspergillus subgen. Fumigati</taxon>
    </lineage>
</organism>
<name>IELA_ASPFC</name>
<sequence>MKFSLACLLALAGLQAALADPATCEKEAQFVKQELIGQPYTDAVANALQSNPIRVLHPGDMITMEYIASRLNIQVNENNEIISAHCA</sequence>
<protein>
    <recommendedName>
        <fullName>Elastase inhibitor AFLEI</fullName>
    </recommendedName>
</protein>
<comment type="function">
    <text evidence="1">Elastase inhibitor.</text>
</comment>
<comment type="subcellular location">
    <subcellularLocation>
        <location evidence="3">Secreted</location>
    </subcellularLocation>
</comment>
<keyword id="KW-1015">Disulfide bond</keyword>
<keyword id="KW-0646">Protease inhibitor</keyword>
<keyword id="KW-0964">Secreted</keyword>
<keyword id="KW-0722">Serine protease inhibitor</keyword>
<keyword id="KW-0732">Signal</keyword>
<accession>B0XZT4</accession>
<gene>
    <name type="ORF">AFUB_034300</name>
</gene>